<proteinExistence type="inferred from homology"/>
<sequence length="360" mass="40174">MKKHNFTAGPCILNDLVLKDAASACLNFAGTGLSVLEVSHRDKEFDAVMLEARNLFKELLDVPEGYEVLFLGGGASLQFYQVPLNLLKKKAAFINTGTWATNAIKQAKIMTQVYGGEVEVLASSEDKNFSYIPKDFVIPEDVDYFHFTTNNTIYGTEIRKDFDTKTRLVADMSSDIFSRPIDVSKYDLIYGGAQKNIGPAGATFVLVKTDVLGQVDRPLPDMLNYQIHIKKDSMFNTPPVFPVYVALQTMKWYKELGGVKVLEKMNLDKAALIYDAIDSSKIFRGTVNPEDRSIMNACFVMKDEYKELEKEFATFAASRGMVGIKGHRSVGGFRASLYNALPIESVQSLVSVMKEFEAKH</sequence>
<protein>
    <recommendedName>
        <fullName evidence="1">Phosphoserine aminotransferase</fullName>
        <ecNumber evidence="1">2.6.1.52</ecNumber>
    </recommendedName>
    <alternativeName>
        <fullName evidence="1">Phosphohydroxythreonine aminotransferase</fullName>
        <shortName evidence="1">PSAT</shortName>
    </alternativeName>
</protein>
<comment type="function">
    <text evidence="1">Catalyzes the reversible conversion of 3-phosphohydroxypyruvate to phosphoserine and of 3-hydroxy-2-oxo-4-phosphonooxybutanoate to phosphohydroxythreonine.</text>
</comment>
<comment type="catalytic activity">
    <reaction evidence="1">
        <text>O-phospho-L-serine + 2-oxoglutarate = 3-phosphooxypyruvate + L-glutamate</text>
        <dbReference type="Rhea" id="RHEA:14329"/>
        <dbReference type="ChEBI" id="CHEBI:16810"/>
        <dbReference type="ChEBI" id="CHEBI:18110"/>
        <dbReference type="ChEBI" id="CHEBI:29985"/>
        <dbReference type="ChEBI" id="CHEBI:57524"/>
        <dbReference type="EC" id="2.6.1.52"/>
    </reaction>
</comment>
<comment type="catalytic activity">
    <reaction evidence="1">
        <text>4-(phosphooxy)-L-threonine + 2-oxoglutarate = (R)-3-hydroxy-2-oxo-4-phosphooxybutanoate + L-glutamate</text>
        <dbReference type="Rhea" id="RHEA:16573"/>
        <dbReference type="ChEBI" id="CHEBI:16810"/>
        <dbReference type="ChEBI" id="CHEBI:29985"/>
        <dbReference type="ChEBI" id="CHEBI:58452"/>
        <dbReference type="ChEBI" id="CHEBI:58538"/>
        <dbReference type="EC" id="2.6.1.52"/>
    </reaction>
</comment>
<comment type="cofactor">
    <cofactor evidence="1">
        <name>pyridoxal 5'-phosphate</name>
        <dbReference type="ChEBI" id="CHEBI:597326"/>
    </cofactor>
    <text evidence="1">Binds 1 pyridoxal phosphate per subunit.</text>
</comment>
<comment type="pathway">
    <text evidence="1">Amino-acid biosynthesis; L-serine biosynthesis; L-serine from 3-phospho-D-glycerate: step 2/3.</text>
</comment>
<comment type="pathway">
    <text evidence="1">Cofactor biosynthesis; pyridoxine 5'-phosphate biosynthesis; pyridoxine 5'-phosphate from D-erythrose 4-phosphate: step 3/5.</text>
</comment>
<comment type="subunit">
    <text evidence="1">Homodimer.</text>
</comment>
<comment type="subcellular location">
    <subcellularLocation>
        <location evidence="1">Cytoplasm</location>
    </subcellularLocation>
</comment>
<comment type="similarity">
    <text evidence="1">Belongs to the class-V pyridoxal-phosphate-dependent aminotransferase family. SerC subfamily.</text>
</comment>
<evidence type="ECO:0000255" key="1">
    <source>
        <dbReference type="HAMAP-Rule" id="MF_00160"/>
    </source>
</evidence>
<gene>
    <name evidence="1" type="primary">serC</name>
    <name type="ordered locus">PGN_0612</name>
</gene>
<accession>B2RID6</accession>
<organism>
    <name type="scientific">Porphyromonas gingivalis (strain ATCC 33277 / DSM 20709 / CIP 103683 / JCM 12257 / NCTC 11834 / 2561)</name>
    <dbReference type="NCBI Taxonomy" id="431947"/>
    <lineage>
        <taxon>Bacteria</taxon>
        <taxon>Pseudomonadati</taxon>
        <taxon>Bacteroidota</taxon>
        <taxon>Bacteroidia</taxon>
        <taxon>Bacteroidales</taxon>
        <taxon>Porphyromonadaceae</taxon>
        <taxon>Porphyromonas</taxon>
    </lineage>
</organism>
<keyword id="KW-0028">Amino-acid biosynthesis</keyword>
<keyword id="KW-0032">Aminotransferase</keyword>
<keyword id="KW-0963">Cytoplasm</keyword>
<keyword id="KW-0663">Pyridoxal phosphate</keyword>
<keyword id="KW-0664">Pyridoxine biosynthesis</keyword>
<keyword id="KW-0718">Serine biosynthesis</keyword>
<keyword id="KW-0808">Transferase</keyword>
<dbReference type="EC" id="2.6.1.52" evidence="1"/>
<dbReference type="EMBL" id="AP009380">
    <property type="protein sequence ID" value="BAG33131.1"/>
    <property type="molecule type" value="Genomic_DNA"/>
</dbReference>
<dbReference type="RefSeq" id="WP_005874020.1">
    <property type="nucleotide sequence ID" value="NZ_CP025930.1"/>
</dbReference>
<dbReference type="SMR" id="B2RID6"/>
<dbReference type="GeneID" id="29255839"/>
<dbReference type="KEGG" id="pgn:PGN_0612"/>
<dbReference type="eggNOG" id="COG1932">
    <property type="taxonomic scope" value="Bacteria"/>
</dbReference>
<dbReference type="HOGENOM" id="CLU_034866_0_2_10"/>
<dbReference type="OrthoDB" id="9809412at2"/>
<dbReference type="BioCyc" id="PGIN431947:G1G2V-673-MONOMER"/>
<dbReference type="UniPathway" id="UPA00135">
    <property type="reaction ID" value="UER00197"/>
</dbReference>
<dbReference type="UniPathway" id="UPA00244">
    <property type="reaction ID" value="UER00311"/>
</dbReference>
<dbReference type="Proteomes" id="UP000008842">
    <property type="component" value="Chromosome"/>
</dbReference>
<dbReference type="GO" id="GO:0005737">
    <property type="term" value="C:cytoplasm"/>
    <property type="evidence" value="ECO:0007669"/>
    <property type="project" value="UniProtKB-SubCell"/>
</dbReference>
<dbReference type="GO" id="GO:0004648">
    <property type="term" value="F:O-phospho-L-serine:2-oxoglutarate aminotransferase activity"/>
    <property type="evidence" value="ECO:0007669"/>
    <property type="project" value="UniProtKB-UniRule"/>
</dbReference>
<dbReference type="GO" id="GO:0030170">
    <property type="term" value="F:pyridoxal phosphate binding"/>
    <property type="evidence" value="ECO:0007669"/>
    <property type="project" value="UniProtKB-UniRule"/>
</dbReference>
<dbReference type="GO" id="GO:0006564">
    <property type="term" value="P:L-serine biosynthetic process"/>
    <property type="evidence" value="ECO:0007669"/>
    <property type="project" value="UniProtKB-UniRule"/>
</dbReference>
<dbReference type="GO" id="GO:0008615">
    <property type="term" value="P:pyridoxine biosynthetic process"/>
    <property type="evidence" value="ECO:0007669"/>
    <property type="project" value="UniProtKB-UniRule"/>
</dbReference>
<dbReference type="FunFam" id="3.40.640.10:FF:000010">
    <property type="entry name" value="Phosphoserine aminotransferase"/>
    <property type="match status" value="1"/>
</dbReference>
<dbReference type="FunFam" id="3.90.1150.10:FF:000006">
    <property type="entry name" value="Phosphoserine aminotransferase"/>
    <property type="match status" value="1"/>
</dbReference>
<dbReference type="Gene3D" id="3.90.1150.10">
    <property type="entry name" value="Aspartate Aminotransferase, domain 1"/>
    <property type="match status" value="1"/>
</dbReference>
<dbReference type="Gene3D" id="3.40.640.10">
    <property type="entry name" value="Type I PLP-dependent aspartate aminotransferase-like (Major domain)"/>
    <property type="match status" value="1"/>
</dbReference>
<dbReference type="HAMAP" id="MF_00160">
    <property type="entry name" value="SerC_aminotrans_5"/>
    <property type="match status" value="1"/>
</dbReference>
<dbReference type="InterPro" id="IPR000192">
    <property type="entry name" value="Aminotrans_V_dom"/>
</dbReference>
<dbReference type="InterPro" id="IPR020578">
    <property type="entry name" value="Aminotrans_V_PyrdxlP_BS"/>
</dbReference>
<dbReference type="InterPro" id="IPR022278">
    <property type="entry name" value="Pser_aminoTfrase"/>
</dbReference>
<dbReference type="InterPro" id="IPR015424">
    <property type="entry name" value="PyrdxlP-dep_Trfase"/>
</dbReference>
<dbReference type="InterPro" id="IPR015421">
    <property type="entry name" value="PyrdxlP-dep_Trfase_major"/>
</dbReference>
<dbReference type="InterPro" id="IPR015422">
    <property type="entry name" value="PyrdxlP-dep_Trfase_small"/>
</dbReference>
<dbReference type="NCBIfam" id="NF003764">
    <property type="entry name" value="PRK05355.1"/>
    <property type="match status" value="1"/>
</dbReference>
<dbReference type="NCBIfam" id="TIGR01364">
    <property type="entry name" value="serC_1"/>
    <property type="match status" value="1"/>
</dbReference>
<dbReference type="PANTHER" id="PTHR43247">
    <property type="entry name" value="PHOSPHOSERINE AMINOTRANSFERASE"/>
    <property type="match status" value="1"/>
</dbReference>
<dbReference type="PANTHER" id="PTHR43247:SF1">
    <property type="entry name" value="PHOSPHOSERINE AMINOTRANSFERASE"/>
    <property type="match status" value="1"/>
</dbReference>
<dbReference type="Pfam" id="PF00266">
    <property type="entry name" value="Aminotran_5"/>
    <property type="match status" value="1"/>
</dbReference>
<dbReference type="PIRSF" id="PIRSF000525">
    <property type="entry name" value="SerC"/>
    <property type="match status" value="1"/>
</dbReference>
<dbReference type="SUPFAM" id="SSF53383">
    <property type="entry name" value="PLP-dependent transferases"/>
    <property type="match status" value="1"/>
</dbReference>
<dbReference type="PROSITE" id="PS00595">
    <property type="entry name" value="AA_TRANSFER_CLASS_5"/>
    <property type="match status" value="1"/>
</dbReference>
<reference key="1">
    <citation type="journal article" date="2008" name="DNA Res.">
        <title>Determination of the genome sequence of Porphyromonas gingivalis strain ATCC 33277 and genomic comparison with strain W83 revealed extensive genome rearrangements in P. gingivalis.</title>
        <authorList>
            <person name="Naito M."/>
            <person name="Hirakawa H."/>
            <person name="Yamashita A."/>
            <person name="Ohara N."/>
            <person name="Shoji M."/>
            <person name="Yukitake H."/>
            <person name="Nakayama K."/>
            <person name="Toh H."/>
            <person name="Yoshimura F."/>
            <person name="Kuhara S."/>
            <person name="Hattori M."/>
            <person name="Hayashi T."/>
            <person name="Nakayama K."/>
        </authorList>
    </citation>
    <scope>NUCLEOTIDE SEQUENCE [LARGE SCALE GENOMIC DNA]</scope>
    <source>
        <strain>ATCC 33277 / DSM 20709 / CIP 103683 / JCM 12257 / NCTC 11834 / 2561</strain>
    </source>
</reference>
<feature type="chain" id="PRO_1000097219" description="Phosphoserine aminotransferase">
    <location>
        <begin position="1"/>
        <end position="360"/>
    </location>
</feature>
<feature type="binding site" evidence="1">
    <location>
        <position position="41"/>
    </location>
    <ligand>
        <name>L-glutamate</name>
        <dbReference type="ChEBI" id="CHEBI:29985"/>
    </ligand>
</feature>
<feature type="binding site" evidence="1">
    <location>
        <begin position="75"/>
        <end position="76"/>
    </location>
    <ligand>
        <name>pyridoxal 5'-phosphate</name>
        <dbReference type="ChEBI" id="CHEBI:597326"/>
    </ligand>
</feature>
<feature type="binding site" evidence="1">
    <location>
        <position position="99"/>
    </location>
    <ligand>
        <name>pyridoxal 5'-phosphate</name>
        <dbReference type="ChEBI" id="CHEBI:597326"/>
    </ligand>
</feature>
<feature type="binding site" evidence="1">
    <location>
        <position position="152"/>
    </location>
    <ligand>
        <name>pyridoxal 5'-phosphate</name>
        <dbReference type="ChEBI" id="CHEBI:597326"/>
    </ligand>
</feature>
<feature type="binding site" evidence="1">
    <location>
        <position position="171"/>
    </location>
    <ligand>
        <name>pyridoxal 5'-phosphate</name>
        <dbReference type="ChEBI" id="CHEBI:597326"/>
    </ligand>
</feature>
<feature type="binding site" evidence="1">
    <location>
        <position position="194"/>
    </location>
    <ligand>
        <name>pyridoxal 5'-phosphate</name>
        <dbReference type="ChEBI" id="CHEBI:597326"/>
    </ligand>
</feature>
<feature type="binding site" evidence="1">
    <location>
        <begin position="236"/>
        <end position="237"/>
    </location>
    <ligand>
        <name>pyridoxal 5'-phosphate</name>
        <dbReference type="ChEBI" id="CHEBI:597326"/>
    </ligand>
</feature>
<feature type="modified residue" description="N6-(pyridoxal phosphate)lysine" evidence="1">
    <location>
        <position position="195"/>
    </location>
</feature>
<name>SERC_PORG3</name>